<accession>Q0W5C8</accession>
<comment type="similarity">
    <text evidence="1">Belongs to the DNA glycosylase MPG family.</text>
</comment>
<keyword id="KW-0227">DNA damage</keyword>
<keyword id="KW-0234">DNA repair</keyword>
<keyword id="KW-0378">Hydrolase</keyword>
<keyword id="KW-1185">Reference proteome</keyword>
<feature type="chain" id="PRO_1000051001" description="Putative 3-methyladenine DNA glycosylase">
    <location>
        <begin position="1"/>
        <end position="200"/>
    </location>
</feature>
<organism>
    <name type="scientific">Methanocella arvoryzae (strain DSM 22066 / NBRC 105507 / MRE50)</name>
    <dbReference type="NCBI Taxonomy" id="351160"/>
    <lineage>
        <taxon>Archaea</taxon>
        <taxon>Methanobacteriati</taxon>
        <taxon>Methanobacteriota</taxon>
        <taxon>Stenosarchaea group</taxon>
        <taxon>Methanomicrobia</taxon>
        <taxon>Methanocellales</taxon>
        <taxon>Methanocellaceae</taxon>
        <taxon>Methanocella</taxon>
    </lineage>
</organism>
<proteinExistence type="inferred from homology"/>
<sequence>MPVLPRDFYDRPTLEVARDLLGKTLVRQLPAGRVALRIVETEAYIGENDKACHASKGMTARNRVMFGQPGHAYVYLIYGMYNCLNLVTEKDGYPAAVLIRAGEPIEGEEIMSSLRPKARKHHEIASGPGKLCGAMSITRALNGADVCASGELYVEDGPAVKKIVACPRIGVDYAGEDALRPWRFYDKNSPCVSKRAPGDI</sequence>
<name>3MGH_METAR</name>
<protein>
    <recommendedName>
        <fullName evidence="1">Putative 3-methyladenine DNA glycosylase</fullName>
        <ecNumber evidence="1">3.2.2.-</ecNumber>
    </recommendedName>
</protein>
<evidence type="ECO:0000255" key="1">
    <source>
        <dbReference type="HAMAP-Rule" id="MF_00527"/>
    </source>
</evidence>
<dbReference type="EC" id="3.2.2.-" evidence="1"/>
<dbReference type="EMBL" id="AM114193">
    <property type="protein sequence ID" value="CAJ36415.1"/>
    <property type="molecule type" value="Genomic_DNA"/>
</dbReference>
<dbReference type="RefSeq" id="WP_012036110.1">
    <property type="nucleotide sequence ID" value="NC_009464.1"/>
</dbReference>
<dbReference type="SMR" id="Q0W5C8"/>
<dbReference type="STRING" id="351160.RCIX1098"/>
<dbReference type="GeneID" id="5144724"/>
<dbReference type="KEGG" id="rci:RCIX1098"/>
<dbReference type="eggNOG" id="arCOG04295">
    <property type="taxonomic scope" value="Archaea"/>
</dbReference>
<dbReference type="OrthoDB" id="31217at2157"/>
<dbReference type="Proteomes" id="UP000000663">
    <property type="component" value="Chromosome"/>
</dbReference>
<dbReference type="GO" id="GO:0003905">
    <property type="term" value="F:alkylbase DNA N-glycosylase activity"/>
    <property type="evidence" value="ECO:0007669"/>
    <property type="project" value="InterPro"/>
</dbReference>
<dbReference type="GO" id="GO:0003677">
    <property type="term" value="F:DNA binding"/>
    <property type="evidence" value="ECO:0007669"/>
    <property type="project" value="InterPro"/>
</dbReference>
<dbReference type="GO" id="GO:0006284">
    <property type="term" value="P:base-excision repair"/>
    <property type="evidence" value="ECO:0007669"/>
    <property type="project" value="InterPro"/>
</dbReference>
<dbReference type="CDD" id="cd00540">
    <property type="entry name" value="AAG"/>
    <property type="match status" value="1"/>
</dbReference>
<dbReference type="FunFam" id="3.10.300.10:FF:000001">
    <property type="entry name" value="Putative 3-methyladenine DNA glycosylase"/>
    <property type="match status" value="1"/>
</dbReference>
<dbReference type="Gene3D" id="3.10.300.10">
    <property type="entry name" value="Methylpurine-DNA glycosylase (MPG)"/>
    <property type="match status" value="1"/>
</dbReference>
<dbReference type="HAMAP" id="MF_00527">
    <property type="entry name" value="3MGH"/>
    <property type="match status" value="1"/>
</dbReference>
<dbReference type="InterPro" id="IPR011034">
    <property type="entry name" value="Formyl_transferase-like_C_sf"/>
</dbReference>
<dbReference type="InterPro" id="IPR003180">
    <property type="entry name" value="MPG"/>
</dbReference>
<dbReference type="InterPro" id="IPR036995">
    <property type="entry name" value="MPG_sf"/>
</dbReference>
<dbReference type="NCBIfam" id="TIGR00567">
    <property type="entry name" value="3mg"/>
    <property type="match status" value="1"/>
</dbReference>
<dbReference type="NCBIfam" id="NF002003">
    <property type="entry name" value="PRK00802.1-3"/>
    <property type="match status" value="1"/>
</dbReference>
<dbReference type="PANTHER" id="PTHR10429">
    <property type="entry name" value="DNA-3-METHYLADENINE GLYCOSYLASE"/>
    <property type="match status" value="1"/>
</dbReference>
<dbReference type="PANTHER" id="PTHR10429:SF0">
    <property type="entry name" value="DNA-3-METHYLADENINE GLYCOSYLASE"/>
    <property type="match status" value="1"/>
</dbReference>
<dbReference type="Pfam" id="PF02245">
    <property type="entry name" value="Pur_DNA_glyco"/>
    <property type="match status" value="1"/>
</dbReference>
<dbReference type="SUPFAM" id="SSF50486">
    <property type="entry name" value="FMT C-terminal domain-like"/>
    <property type="match status" value="1"/>
</dbReference>
<reference key="1">
    <citation type="journal article" date="2006" name="Science">
        <title>Genome of rice cluster I archaea -- the key methane producers in the rice rhizosphere.</title>
        <authorList>
            <person name="Erkel C."/>
            <person name="Kube M."/>
            <person name="Reinhardt R."/>
            <person name="Liesack W."/>
        </authorList>
    </citation>
    <scope>NUCLEOTIDE SEQUENCE [LARGE SCALE GENOMIC DNA]</scope>
    <source>
        <strain>DSM 22066 / NBRC 105507 / MRE50</strain>
    </source>
</reference>
<gene>
    <name type="ordered locus">UNCMA_17850</name>
    <name type="ORF">RCIX1098</name>
</gene>